<keyword id="KW-0963">Cytoplasm</keyword>
<keyword id="KW-0489">Methyltransferase</keyword>
<keyword id="KW-0694">RNA-binding</keyword>
<keyword id="KW-0698">rRNA processing</keyword>
<keyword id="KW-0949">S-adenosyl-L-methionine</keyword>
<keyword id="KW-0808">Transferase</keyword>
<protein>
    <recommendedName>
        <fullName evidence="1">Probable ribosomal RNA small subunit methyltransferase A</fullName>
        <ecNumber evidence="1">2.1.1.-</ecNumber>
    </recommendedName>
    <alternativeName>
        <fullName evidence="1">16S rRNA dimethyladenosine transferase</fullName>
    </alternativeName>
    <alternativeName>
        <fullName evidence="1">16S rRNA dimethylase</fullName>
    </alternativeName>
    <alternativeName>
        <fullName evidence="1">S-adenosylmethionine-6-N',N'-adenosyl(rRNA) dimethyltransferase</fullName>
    </alternativeName>
</protein>
<comment type="function">
    <text evidence="1">Specifically dimethylates two adjacent adenosines in the loop of a conserved hairpin near the 3'-end of 16S rRNA in the 30S particle. May play a critical role in biogenesis of 30S subunits.</text>
</comment>
<comment type="subcellular location">
    <subcellularLocation>
        <location evidence="1">Cytoplasm</location>
    </subcellularLocation>
</comment>
<comment type="similarity">
    <text evidence="1">Belongs to the class I-like SAM-binding methyltransferase superfamily. rRNA adenine N(6)-methyltransferase family. RsmA subfamily.</text>
</comment>
<reference key="1">
    <citation type="submission" date="2007-06" db="EMBL/GenBank/DDBJ databases">
        <title>Complete sequence of Methanococcus maripaludis C7.</title>
        <authorList>
            <consortium name="US DOE Joint Genome Institute"/>
            <person name="Copeland A."/>
            <person name="Lucas S."/>
            <person name="Lapidus A."/>
            <person name="Barry K."/>
            <person name="Glavina del Rio T."/>
            <person name="Dalin E."/>
            <person name="Tice H."/>
            <person name="Pitluck S."/>
            <person name="Clum A."/>
            <person name="Schmutz J."/>
            <person name="Larimer F."/>
            <person name="Land M."/>
            <person name="Hauser L."/>
            <person name="Kyrpides N."/>
            <person name="Anderson I."/>
            <person name="Sieprawska-Lupa M."/>
            <person name="Whitman W.B."/>
            <person name="Richardson P."/>
        </authorList>
    </citation>
    <scope>NUCLEOTIDE SEQUENCE [LARGE SCALE GENOMIC DNA]</scope>
    <source>
        <strain>C7 / ATCC BAA-1331</strain>
    </source>
</reference>
<sequence length="263" mass="30477">MRQSKKLGQCFLKDKNFVKKAINRAELTDKDIVLEVGLGEGALTKELAKIAKKVYVIELDERLKPFADEITSEFENVEIIWSDALKVDLKTLGFNKIVANLPYQISSPITFKFLEEDFEVAVLMYQYEFAKRMAGKPDTKEYSRLSVAVQYNADVEFICKVPPSAFSPKPDVNSAIVKLTKREPKYHVKDEEFFKKVLKAIFQHRNRTIKRALIDSSHEIGIERNILKEILEKIENKFEFTERVFKTPPEKIGYLSNLLYDEI</sequence>
<feature type="chain" id="PRO_1000056636" description="Probable ribosomal RNA small subunit methyltransferase A">
    <location>
        <begin position="1"/>
        <end position="263"/>
    </location>
</feature>
<feature type="binding site" evidence="1">
    <location>
        <position position="12"/>
    </location>
    <ligand>
        <name>S-adenosyl-L-methionine</name>
        <dbReference type="ChEBI" id="CHEBI:59789"/>
    </ligand>
</feature>
<feature type="binding site" evidence="1">
    <location>
        <position position="37"/>
    </location>
    <ligand>
        <name>S-adenosyl-L-methionine</name>
        <dbReference type="ChEBI" id="CHEBI:59789"/>
    </ligand>
</feature>
<feature type="binding site" evidence="1">
    <location>
        <position position="58"/>
    </location>
    <ligand>
        <name>S-adenosyl-L-methionine</name>
        <dbReference type="ChEBI" id="CHEBI:59789"/>
    </ligand>
</feature>
<feature type="binding site" evidence="1">
    <location>
        <position position="83"/>
    </location>
    <ligand>
        <name>S-adenosyl-L-methionine</name>
        <dbReference type="ChEBI" id="CHEBI:59789"/>
    </ligand>
</feature>
<feature type="binding site" evidence="1">
    <location>
        <position position="100"/>
    </location>
    <ligand>
        <name>S-adenosyl-L-methionine</name>
        <dbReference type="ChEBI" id="CHEBI:59789"/>
    </ligand>
</feature>
<name>RSMA_METM7</name>
<organism>
    <name type="scientific">Methanococcus maripaludis (strain C7 / ATCC BAA-1331)</name>
    <dbReference type="NCBI Taxonomy" id="426368"/>
    <lineage>
        <taxon>Archaea</taxon>
        <taxon>Methanobacteriati</taxon>
        <taxon>Methanobacteriota</taxon>
        <taxon>Methanomada group</taxon>
        <taxon>Methanococci</taxon>
        <taxon>Methanococcales</taxon>
        <taxon>Methanococcaceae</taxon>
        <taxon>Methanococcus</taxon>
    </lineage>
</organism>
<proteinExistence type="inferred from homology"/>
<gene>
    <name evidence="1" type="primary">rsmA</name>
    <name evidence="1" type="synonym">ksgA</name>
    <name type="ordered locus">MmarC7_0228</name>
</gene>
<evidence type="ECO:0000255" key="1">
    <source>
        <dbReference type="HAMAP-Rule" id="MF_00607"/>
    </source>
</evidence>
<dbReference type="EC" id="2.1.1.-" evidence="1"/>
<dbReference type="EMBL" id="CP000745">
    <property type="protein sequence ID" value="ABR65298.1"/>
    <property type="molecule type" value="Genomic_DNA"/>
</dbReference>
<dbReference type="SMR" id="A6VFS2"/>
<dbReference type="STRING" id="426368.MmarC7_0228"/>
<dbReference type="KEGG" id="mmz:MmarC7_0228"/>
<dbReference type="eggNOG" id="arCOG04131">
    <property type="taxonomic scope" value="Archaea"/>
</dbReference>
<dbReference type="HOGENOM" id="CLU_041220_0_2_2"/>
<dbReference type="OrthoDB" id="9883at2157"/>
<dbReference type="GO" id="GO:0005737">
    <property type="term" value="C:cytoplasm"/>
    <property type="evidence" value="ECO:0007669"/>
    <property type="project" value="UniProtKB-SubCell"/>
</dbReference>
<dbReference type="GO" id="GO:0003723">
    <property type="term" value="F:RNA binding"/>
    <property type="evidence" value="ECO:0007669"/>
    <property type="project" value="UniProtKB-KW"/>
</dbReference>
<dbReference type="GO" id="GO:0000179">
    <property type="term" value="F:rRNA (adenine-N6,N6-)-dimethyltransferase activity"/>
    <property type="evidence" value="ECO:0007669"/>
    <property type="project" value="InterPro"/>
</dbReference>
<dbReference type="CDD" id="cd02440">
    <property type="entry name" value="AdoMet_MTases"/>
    <property type="match status" value="1"/>
</dbReference>
<dbReference type="FunFam" id="3.40.50.150:FF:000023">
    <property type="entry name" value="Ribosomal RNA small subunit methyltransferase A"/>
    <property type="match status" value="1"/>
</dbReference>
<dbReference type="Gene3D" id="1.10.8.100">
    <property type="entry name" value="Ribosomal RNA adenine dimethylase-like, domain 2"/>
    <property type="match status" value="1"/>
</dbReference>
<dbReference type="Gene3D" id="3.40.50.150">
    <property type="entry name" value="Vaccinia Virus protein VP39"/>
    <property type="match status" value="1"/>
</dbReference>
<dbReference type="HAMAP" id="MF_00607">
    <property type="entry name" value="16SrRNA_methyltr_A"/>
    <property type="match status" value="1"/>
</dbReference>
<dbReference type="InterPro" id="IPR001737">
    <property type="entry name" value="KsgA/Erm"/>
</dbReference>
<dbReference type="InterPro" id="IPR023165">
    <property type="entry name" value="rRNA_Ade_diMease-like_C"/>
</dbReference>
<dbReference type="InterPro" id="IPR020596">
    <property type="entry name" value="rRNA_Ade_Mease_Trfase_CS"/>
</dbReference>
<dbReference type="InterPro" id="IPR020598">
    <property type="entry name" value="rRNA_Ade_methylase_Trfase_N"/>
</dbReference>
<dbReference type="InterPro" id="IPR011530">
    <property type="entry name" value="rRNA_adenine_dimethylase"/>
</dbReference>
<dbReference type="InterPro" id="IPR029063">
    <property type="entry name" value="SAM-dependent_MTases_sf"/>
</dbReference>
<dbReference type="NCBIfam" id="TIGR00755">
    <property type="entry name" value="ksgA"/>
    <property type="match status" value="1"/>
</dbReference>
<dbReference type="PANTHER" id="PTHR11727">
    <property type="entry name" value="DIMETHYLADENOSINE TRANSFERASE"/>
    <property type="match status" value="1"/>
</dbReference>
<dbReference type="PANTHER" id="PTHR11727:SF7">
    <property type="entry name" value="DIMETHYLADENOSINE TRANSFERASE-RELATED"/>
    <property type="match status" value="1"/>
</dbReference>
<dbReference type="Pfam" id="PF00398">
    <property type="entry name" value="RrnaAD"/>
    <property type="match status" value="1"/>
</dbReference>
<dbReference type="SMART" id="SM00650">
    <property type="entry name" value="rADc"/>
    <property type="match status" value="1"/>
</dbReference>
<dbReference type="SUPFAM" id="SSF53335">
    <property type="entry name" value="S-adenosyl-L-methionine-dependent methyltransferases"/>
    <property type="match status" value="1"/>
</dbReference>
<dbReference type="PROSITE" id="PS01131">
    <property type="entry name" value="RRNA_A_DIMETH"/>
    <property type="match status" value="1"/>
</dbReference>
<dbReference type="PROSITE" id="PS51689">
    <property type="entry name" value="SAM_RNA_A_N6_MT"/>
    <property type="match status" value="1"/>
</dbReference>
<accession>A6VFS2</accession>